<protein>
    <recommendedName>
        <fullName>La-related protein 6A</fullName>
        <shortName>AtLARP6a</shortName>
    </recommendedName>
</protein>
<gene>
    <name type="primary">LARP6A</name>
    <name type="ordered locus">At5g46250</name>
    <name type="ORF">MPL12.3</name>
</gene>
<accession>Q94A38</accession>
<accession>A8MS45</accession>
<accession>F4KG39</accession>
<accession>Q9FL36</accession>
<feature type="chain" id="PRO_0000428669" description="La-related protein 6A">
    <location>
        <begin position="1"/>
        <end position="422"/>
    </location>
</feature>
<feature type="domain" description="HTH La-type RNA-binding" evidence="3">
    <location>
        <begin position="97"/>
        <end position="188"/>
    </location>
</feature>
<feature type="domain" description="RRM" evidence="2">
    <location>
        <begin position="193"/>
        <end position="283"/>
    </location>
</feature>
<feature type="region of interest" description="Disordered" evidence="4">
    <location>
        <begin position="1"/>
        <end position="94"/>
    </location>
</feature>
<feature type="region of interest" description="Disordered" evidence="4">
    <location>
        <begin position="286"/>
        <end position="422"/>
    </location>
</feature>
<feature type="compositionally biased region" description="Low complexity" evidence="4">
    <location>
        <begin position="48"/>
        <end position="61"/>
    </location>
</feature>
<feature type="compositionally biased region" description="Basic and acidic residues" evidence="4">
    <location>
        <begin position="73"/>
        <end position="89"/>
    </location>
</feature>
<feature type="compositionally biased region" description="Basic and acidic residues" evidence="4">
    <location>
        <begin position="295"/>
        <end position="348"/>
    </location>
</feature>
<feature type="splice variant" id="VSP_054173" description="In isoform 3." evidence="5">
    <original>AA</original>
    <variation>VT</variation>
    <location>
        <begin position="263"/>
        <end position="264"/>
    </location>
</feature>
<feature type="splice variant" id="VSP_054174" description="In isoform 2 and isoform 3." evidence="5">
    <original>DGG</original>
    <variation>VKG</variation>
    <location>
        <begin position="338"/>
        <end position="340"/>
    </location>
</feature>
<feature type="splice variant" id="VSP_054175" description="In isoform 2 and isoform 3." evidence="5">
    <location>
        <begin position="341"/>
        <end position="422"/>
    </location>
</feature>
<organism>
    <name type="scientific">Arabidopsis thaliana</name>
    <name type="common">Mouse-ear cress</name>
    <dbReference type="NCBI Taxonomy" id="3702"/>
    <lineage>
        <taxon>Eukaryota</taxon>
        <taxon>Viridiplantae</taxon>
        <taxon>Streptophyta</taxon>
        <taxon>Embryophyta</taxon>
        <taxon>Tracheophyta</taxon>
        <taxon>Spermatophyta</taxon>
        <taxon>Magnoliopsida</taxon>
        <taxon>eudicotyledons</taxon>
        <taxon>Gunneridae</taxon>
        <taxon>Pentapetalae</taxon>
        <taxon>rosids</taxon>
        <taxon>malvids</taxon>
        <taxon>Brassicales</taxon>
        <taxon>Brassicaceae</taxon>
        <taxon>Camelineae</taxon>
        <taxon>Arabidopsis</taxon>
    </lineage>
</organism>
<name>LRP6A_ARATH</name>
<reference key="1">
    <citation type="journal article" date="1998" name="DNA Res.">
        <title>Structural analysis of Arabidopsis thaliana chromosome 5. V. Sequence features of the regions of 1,381,565 bp covered by twenty one physically assigned P1 and TAC clones.</title>
        <authorList>
            <person name="Kaneko T."/>
            <person name="Kotani H."/>
            <person name="Nakamura Y."/>
            <person name="Sato S."/>
            <person name="Asamizu E."/>
            <person name="Miyajima N."/>
            <person name="Tabata S."/>
        </authorList>
    </citation>
    <scope>NUCLEOTIDE SEQUENCE [LARGE SCALE GENOMIC DNA]</scope>
    <source>
        <strain>cv. Columbia</strain>
    </source>
</reference>
<reference key="2">
    <citation type="journal article" date="2017" name="Plant J.">
        <title>Araport11: a complete reannotation of the Arabidopsis thaliana reference genome.</title>
        <authorList>
            <person name="Cheng C.Y."/>
            <person name="Krishnakumar V."/>
            <person name="Chan A.P."/>
            <person name="Thibaud-Nissen F."/>
            <person name="Schobel S."/>
            <person name="Town C.D."/>
        </authorList>
    </citation>
    <scope>GENOME REANNOTATION</scope>
    <source>
        <strain>cv. Columbia</strain>
    </source>
</reference>
<reference key="3">
    <citation type="journal article" date="2003" name="Science">
        <title>Empirical analysis of transcriptional activity in the Arabidopsis genome.</title>
        <authorList>
            <person name="Yamada K."/>
            <person name="Lim J."/>
            <person name="Dale J.M."/>
            <person name="Chen H."/>
            <person name="Shinn P."/>
            <person name="Palm C.J."/>
            <person name="Southwick A.M."/>
            <person name="Wu H.C."/>
            <person name="Kim C.J."/>
            <person name="Nguyen M."/>
            <person name="Pham P.K."/>
            <person name="Cheuk R.F."/>
            <person name="Karlin-Newmann G."/>
            <person name="Liu S.X."/>
            <person name="Lam B."/>
            <person name="Sakano H."/>
            <person name="Wu T."/>
            <person name="Yu G."/>
            <person name="Miranda M."/>
            <person name="Quach H.L."/>
            <person name="Tripp M."/>
            <person name="Chang C.H."/>
            <person name="Lee J.M."/>
            <person name="Toriumi M.J."/>
            <person name="Chan M.M."/>
            <person name="Tang C.C."/>
            <person name="Onodera C.S."/>
            <person name="Deng J.M."/>
            <person name="Akiyama K."/>
            <person name="Ansari Y."/>
            <person name="Arakawa T."/>
            <person name="Banh J."/>
            <person name="Banno F."/>
            <person name="Bowser L."/>
            <person name="Brooks S.Y."/>
            <person name="Carninci P."/>
            <person name="Chao Q."/>
            <person name="Choy N."/>
            <person name="Enju A."/>
            <person name="Goldsmith A.D."/>
            <person name="Gurjal M."/>
            <person name="Hansen N.F."/>
            <person name="Hayashizaki Y."/>
            <person name="Johnson-Hopson C."/>
            <person name="Hsuan V.W."/>
            <person name="Iida K."/>
            <person name="Karnes M."/>
            <person name="Khan S."/>
            <person name="Koesema E."/>
            <person name="Ishida J."/>
            <person name="Jiang P.X."/>
            <person name="Jones T."/>
            <person name="Kawai J."/>
            <person name="Kamiya A."/>
            <person name="Meyers C."/>
            <person name="Nakajima M."/>
            <person name="Narusaka M."/>
            <person name="Seki M."/>
            <person name="Sakurai T."/>
            <person name="Satou M."/>
            <person name="Tamse R."/>
            <person name="Vaysberg M."/>
            <person name="Wallender E.K."/>
            <person name="Wong C."/>
            <person name="Yamamura Y."/>
            <person name="Yuan S."/>
            <person name="Shinozaki K."/>
            <person name="Davis R.W."/>
            <person name="Theologis A."/>
            <person name="Ecker J.R."/>
        </authorList>
    </citation>
    <scope>NUCLEOTIDE SEQUENCE [LARGE SCALE MRNA] (ISOFORM 1)</scope>
    <source>
        <strain>cv. Columbia</strain>
    </source>
</reference>
<reference key="4">
    <citation type="journal article" date="2009" name="RNA">
        <title>A comprehensive analysis of the La-motif protein superfamily.</title>
        <authorList>
            <person name="Bousquet-Antonelli C."/>
            <person name="Deragon J.M."/>
        </authorList>
    </citation>
    <scope>GENE FAMILY</scope>
    <scope>NOMENCLATURE</scope>
</reference>
<sequence>MSSLPLRSGEKMESPSISDAVPLHAPEDATADFSQPQSPLHEVDSFPVTESSDDVVVNVSEIPNLSPSDDDFDHERNSGEDRDQDHGENPVETDGVVVPIDELNQKIIRQVEYYFSDENLPTDKFLLNAMKRNKKGFVPISTIATFHKMKKLTRDHALIVSALKESSFLVVSADEKKVKRLSPLPEIRDPKIFTVLVENLPEDHSNENIREIFGKAGSIKSVSICDPNAVEESEKGGKKENFIRTRLHAFVEYETVEAAEKAAATLNNEQDWRNGLRVKLLEQAAGKFAQRRPARREVDKEKDTTGRVHDQTGGEKNKKTREHQNHRLHHSDNPADDDGGNHQKDKNGNKGRVVGQGRRQNHQGGNGIGHGTASSSSHPNYHPVEVSKRPPGPRMPDGTRGFTMGRGKAIPPPTSTQTSHEV</sequence>
<dbReference type="EMBL" id="AB010698">
    <property type="protein sequence ID" value="BAB11080.1"/>
    <property type="status" value="ALT_INIT"/>
    <property type="molecule type" value="Genomic_DNA"/>
</dbReference>
<dbReference type="EMBL" id="CP002688">
    <property type="protein sequence ID" value="AED95357.1"/>
    <property type="molecule type" value="Genomic_DNA"/>
</dbReference>
<dbReference type="EMBL" id="CP002688">
    <property type="protein sequence ID" value="AED95358.1"/>
    <property type="molecule type" value="Genomic_DNA"/>
</dbReference>
<dbReference type="EMBL" id="CP002688">
    <property type="protein sequence ID" value="AED95359.1"/>
    <property type="molecule type" value="Genomic_DNA"/>
</dbReference>
<dbReference type="EMBL" id="AY050403">
    <property type="protein sequence ID" value="AAK91419.1"/>
    <property type="molecule type" value="mRNA"/>
</dbReference>
<dbReference type="EMBL" id="BT000588">
    <property type="protein sequence ID" value="AAN18157.1"/>
    <property type="molecule type" value="mRNA"/>
</dbReference>
<dbReference type="RefSeq" id="NP_001078721.1">
    <molecule id="Q94A38-3"/>
    <property type="nucleotide sequence ID" value="NM_001085252.1"/>
</dbReference>
<dbReference type="RefSeq" id="NP_568660.3">
    <molecule id="Q94A38-2"/>
    <property type="nucleotide sequence ID" value="NM_123994.4"/>
</dbReference>
<dbReference type="RefSeq" id="NP_851141.1">
    <molecule id="Q94A38-1"/>
    <property type="nucleotide sequence ID" value="NM_180810.3"/>
</dbReference>
<dbReference type="SMR" id="Q94A38"/>
<dbReference type="BioGRID" id="19916">
    <property type="interactions" value="2"/>
</dbReference>
<dbReference type="FunCoup" id="Q94A38">
    <property type="interactions" value="842"/>
</dbReference>
<dbReference type="IntAct" id="Q94A38">
    <property type="interactions" value="2"/>
</dbReference>
<dbReference type="STRING" id="3702.Q94A38"/>
<dbReference type="iPTMnet" id="Q94A38"/>
<dbReference type="PaxDb" id="3702-AT5G46250.1"/>
<dbReference type="ProteomicsDB" id="238592">
    <molecule id="Q94A38-1"/>
</dbReference>
<dbReference type="EnsemblPlants" id="AT5G46250.1">
    <molecule id="Q94A38-1"/>
    <property type="protein sequence ID" value="AT5G46250.1"/>
    <property type="gene ID" value="AT5G46250"/>
</dbReference>
<dbReference type="EnsemblPlants" id="AT5G46250.2">
    <molecule id="Q94A38-2"/>
    <property type="protein sequence ID" value="AT5G46250.2"/>
    <property type="gene ID" value="AT5G46250"/>
</dbReference>
<dbReference type="EnsemblPlants" id="AT5G46250.3">
    <molecule id="Q94A38-3"/>
    <property type="protein sequence ID" value="AT5G46250.3"/>
    <property type="gene ID" value="AT5G46250"/>
</dbReference>
<dbReference type="GeneID" id="834667"/>
<dbReference type="Gramene" id="AT5G46250.1">
    <molecule id="Q94A38-1"/>
    <property type="protein sequence ID" value="AT5G46250.1"/>
    <property type="gene ID" value="AT5G46250"/>
</dbReference>
<dbReference type="Gramene" id="AT5G46250.2">
    <molecule id="Q94A38-2"/>
    <property type="protein sequence ID" value="AT5G46250.2"/>
    <property type="gene ID" value="AT5G46250"/>
</dbReference>
<dbReference type="Gramene" id="AT5G46250.3">
    <molecule id="Q94A38-3"/>
    <property type="protein sequence ID" value="AT5G46250.3"/>
    <property type="gene ID" value="AT5G46250"/>
</dbReference>
<dbReference type="KEGG" id="ath:AT5G46250"/>
<dbReference type="Araport" id="AT5G46250"/>
<dbReference type="TAIR" id="AT5G46250">
    <property type="gene designation" value="LARP6A"/>
</dbReference>
<dbReference type="eggNOG" id="KOG1855">
    <property type="taxonomic scope" value="Eukaryota"/>
</dbReference>
<dbReference type="InParanoid" id="Q94A38"/>
<dbReference type="OMA" id="QMGKYGQ"/>
<dbReference type="PhylomeDB" id="Q94A38"/>
<dbReference type="PRO" id="PR:Q94A38"/>
<dbReference type="Proteomes" id="UP000006548">
    <property type="component" value="Chromosome 5"/>
</dbReference>
<dbReference type="ExpressionAtlas" id="Q94A38">
    <property type="expression patterns" value="baseline and differential"/>
</dbReference>
<dbReference type="GO" id="GO:0005634">
    <property type="term" value="C:nucleus"/>
    <property type="evidence" value="ECO:0007669"/>
    <property type="project" value="UniProtKB-SubCell"/>
</dbReference>
<dbReference type="GO" id="GO:1990904">
    <property type="term" value="C:ribonucleoprotein complex"/>
    <property type="evidence" value="ECO:0007669"/>
    <property type="project" value="InterPro"/>
</dbReference>
<dbReference type="GO" id="GO:0003723">
    <property type="term" value="F:RNA binding"/>
    <property type="evidence" value="ECO:0007669"/>
    <property type="project" value="UniProtKB-KW"/>
</dbReference>
<dbReference type="GO" id="GO:0006396">
    <property type="term" value="P:RNA processing"/>
    <property type="evidence" value="ECO:0007669"/>
    <property type="project" value="InterPro"/>
</dbReference>
<dbReference type="CDD" id="cd08033">
    <property type="entry name" value="LARP_6"/>
    <property type="match status" value="1"/>
</dbReference>
<dbReference type="CDD" id="cd12288">
    <property type="entry name" value="RRM_La_like_plant"/>
    <property type="match status" value="1"/>
</dbReference>
<dbReference type="FunFam" id="1.10.10.10:FF:000158">
    <property type="entry name" value="La ribonucleoprotein domain family member 7"/>
    <property type="match status" value="1"/>
</dbReference>
<dbReference type="Gene3D" id="3.30.70.330">
    <property type="match status" value="1"/>
</dbReference>
<dbReference type="Gene3D" id="1.10.10.10">
    <property type="entry name" value="Winged helix-like DNA-binding domain superfamily/Winged helix DNA-binding domain"/>
    <property type="match status" value="1"/>
</dbReference>
<dbReference type="InterPro" id="IPR034878">
    <property type="entry name" value="La-rel_plant_RRM"/>
</dbReference>
<dbReference type="InterPro" id="IPR045180">
    <property type="entry name" value="La_dom_prot"/>
</dbReference>
<dbReference type="InterPro" id="IPR006630">
    <property type="entry name" value="La_HTH"/>
</dbReference>
<dbReference type="InterPro" id="IPR002344">
    <property type="entry name" value="Lupus_La"/>
</dbReference>
<dbReference type="InterPro" id="IPR012677">
    <property type="entry name" value="Nucleotide-bd_a/b_plait_sf"/>
</dbReference>
<dbReference type="InterPro" id="IPR035979">
    <property type="entry name" value="RBD_domain_sf"/>
</dbReference>
<dbReference type="InterPro" id="IPR000504">
    <property type="entry name" value="RRM_dom"/>
</dbReference>
<dbReference type="InterPro" id="IPR036388">
    <property type="entry name" value="WH-like_DNA-bd_sf"/>
</dbReference>
<dbReference type="InterPro" id="IPR036390">
    <property type="entry name" value="WH_DNA-bd_sf"/>
</dbReference>
<dbReference type="PANTHER" id="PTHR22792:SF159">
    <property type="entry name" value="LA-RELATED PROTEIN 1B-RELATED"/>
    <property type="match status" value="1"/>
</dbReference>
<dbReference type="PANTHER" id="PTHR22792">
    <property type="entry name" value="LUPUS LA PROTEIN-RELATED"/>
    <property type="match status" value="1"/>
</dbReference>
<dbReference type="Pfam" id="PF05383">
    <property type="entry name" value="La"/>
    <property type="match status" value="1"/>
</dbReference>
<dbReference type="Pfam" id="PF00076">
    <property type="entry name" value="RRM_1"/>
    <property type="match status" value="1"/>
</dbReference>
<dbReference type="PRINTS" id="PR00302">
    <property type="entry name" value="LUPUSLA"/>
</dbReference>
<dbReference type="SMART" id="SM00715">
    <property type="entry name" value="LA"/>
    <property type="match status" value="1"/>
</dbReference>
<dbReference type="SMART" id="SM00360">
    <property type="entry name" value="RRM"/>
    <property type="match status" value="1"/>
</dbReference>
<dbReference type="SUPFAM" id="SSF54928">
    <property type="entry name" value="RNA-binding domain, RBD"/>
    <property type="match status" value="1"/>
</dbReference>
<dbReference type="SUPFAM" id="SSF46785">
    <property type="entry name" value="Winged helix' DNA-binding domain"/>
    <property type="match status" value="1"/>
</dbReference>
<dbReference type="PROSITE" id="PS50961">
    <property type="entry name" value="HTH_LA"/>
    <property type="match status" value="1"/>
</dbReference>
<dbReference type="PROSITE" id="PS50102">
    <property type="entry name" value="RRM"/>
    <property type="match status" value="1"/>
</dbReference>
<proteinExistence type="evidence at transcript level"/>
<comment type="function">
    <text evidence="1">Transcriptional regulator.</text>
</comment>
<comment type="subcellular location">
    <subcellularLocation>
        <location evidence="1">Nucleus</location>
    </subcellularLocation>
</comment>
<comment type="alternative products">
    <event type="alternative splicing"/>
    <isoform>
        <id>Q94A38-1</id>
        <name>1</name>
        <sequence type="displayed"/>
    </isoform>
    <isoform>
        <id>Q94A38-2</id>
        <name>2</name>
        <sequence type="described" ref="VSP_054174 VSP_054175"/>
    </isoform>
    <isoform>
        <id>Q94A38-3</id>
        <name>3</name>
        <sequence type="described" ref="VSP_054173 VSP_054174 VSP_054175"/>
    </isoform>
</comment>
<comment type="sequence caution" evidence="5">
    <conflict type="erroneous initiation">
        <sequence resource="EMBL-CDS" id="BAB11080"/>
    </conflict>
    <text>Truncated N-terminus.</text>
</comment>
<keyword id="KW-0025">Alternative splicing</keyword>
<keyword id="KW-0539">Nucleus</keyword>
<keyword id="KW-1185">Reference proteome</keyword>
<keyword id="KW-0694">RNA-binding</keyword>
<keyword id="KW-0804">Transcription</keyword>
<keyword id="KW-0805">Transcription regulation</keyword>
<evidence type="ECO:0000250" key="1"/>
<evidence type="ECO:0000255" key="2">
    <source>
        <dbReference type="PROSITE-ProRule" id="PRU00176"/>
    </source>
</evidence>
<evidence type="ECO:0000255" key="3">
    <source>
        <dbReference type="PROSITE-ProRule" id="PRU00332"/>
    </source>
</evidence>
<evidence type="ECO:0000256" key="4">
    <source>
        <dbReference type="SAM" id="MobiDB-lite"/>
    </source>
</evidence>
<evidence type="ECO:0000305" key="5"/>